<name>SSUB_MYCA1</name>
<accession>A0QFE1</accession>
<feature type="chain" id="PRO_0000279919" description="Aliphatic sulfonates import ATP-binding protein SsuB">
    <location>
        <begin position="1"/>
        <end position="251"/>
    </location>
</feature>
<feature type="domain" description="ABC transporter" evidence="1">
    <location>
        <begin position="19"/>
        <end position="238"/>
    </location>
</feature>
<feature type="binding site" evidence="1">
    <location>
        <begin position="51"/>
        <end position="58"/>
    </location>
    <ligand>
        <name>ATP</name>
        <dbReference type="ChEBI" id="CHEBI:30616"/>
    </ligand>
</feature>
<comment type="function">
    <text evidence="1">Part of the ABC transporter complex SsuABC involved in aliphatic sulfonates import. Responsible for energy coupling to the transport system.</text>
</comment>
<comment type="catalytic activity">
    <reaction evidence="1">
        <text>ATP + H2O + aliphatic sulfonate-[sulfonate-binding protein]Side 1 = ADP + phosphate + aliphatic sulfonateSide 2 + [sulfonate-binding protein]Side 1.</text>
        <dbReference type="EC" id="7.6.2.14"/>
    </reaction>
</comment>
<comment type="subunit">
    <text evidence="1">The complex is composed of two ATP-binding proteins (SsuB), two transmembrane proteins (SsuC) and a solute-binding protein (SsuA).</text>
</comment>
<comment type="subcellular location">
    <subcellularLocation>
        <location evidence="1">Cell membrane</location>
        <topology evidence="1">Peripheral membrane protein</topology>
    </subcellularLocation>
</comment>
<comment type="similarity">
    <text evidence="1">Belongs to the ABC transporter superfamily. Aliphatic sulfonates importer (TC 3.A.1.17.2) family.</text>
</comment>
<dbReference type="EC" id="7.6.2.14" evidence="1"/>
<dbReference type="EMBL" id="CP000479">
    <property type="protein sequence ID" value="ABK65853.1"/>
    <property type="molecule type" value="Genomic_DNA"/>
</dbReference>
<dbReference type="RefSeq" id="WP_003872133.1">
    <property type="nucleotide sequence ID" value="NC_008595.1"/>
</dbReference>
<dbReference type="SMR" id="A0QFE1"/>
<dbReference type="KEGG" id="mav:MAV_2434"/>
<dbReference type="HOGENOM" id="CLU_000604_1_22_11"/>
<dbReference type="Proteomes" id="UP000001574">
    <property type="component" value="Chromosome"/>
</dbReference>
<dbReference type="GO" id="GO:0005886">
    <property type="term" value="C:plasma membrane"/>
    <property type="evidence" value="ECO:0007669"/>
    <property type="project" value="UniProtKB-SubCell"/>
</dbReference>
<dbReference type="GO" id="GO:0005524">
    <property type="term" value="F:ATP binding"/>
    <property type="evidence" value="ECO:0007669"/>
    <property type="project" value="UniProtKB-KW"/>
</dbReference>
<dbReference type="GO" id="GO:0016887">
    <property type="term" value="F:ATP hydrolysis activity"/>
    <property type="evidence" value="ECO:0007669"/>
    <property type="project" value="InterPro"/>
</dbReference>
<dbReference type="CDD" id="cd03293">
    <property type="entry name" value="ABC_NrtD_SsuB_transporters"/>
    <property type="match status" value="1"/>
</dbReference>
<dbReference type="Gene3D" id="3.40.50.300">
    <property type="entry name" value="P-loop containing nucleotide triphosphate hydrolases"/>
    <property type="match status" value="1"/>
</dbReference>
<dbReference type="InterPro" id="IPR003593">
    <property type="entry name" value="AAA+_ATPase"/>
</dbReference>
<dbReference type="InterPro" id="IPR003439">
    <property type="entry name" value="ABC_transporter-like_ATP-bd"/>
</dbReference>
<dbReference type="InterPro" id="IPR017871">
    <property type="entry name" value="ABC_transporter-like_CS"/>
</dbReference>
<dbReference type="InterPro" id="IPR050166">
    <property type="entry name" value="ABC_transporter_ATP-bind"/>
</dbReference>
<dbReference type="InterPro" id="IPR027417">
    <property type="entry name" value="P-loop_NTPase"/>
</dbReference>
<dbReference type="PANTHER" id="PTHR42788:SF17">
    <property type="entry name" value="ALIPHATIC SULFONATES IMPORT ATP-BINDING PROTEIN SSUB"/>
    <property type="match status" value="1"/>
</dbReference>
<dbReference type="PANTHER" id="PTHR42788">
    <property type="entry name" value="TAURINE IMPORT ATP-BINDING PROTEIN-RELATED"/>
    <property type="match status" value="1"/>
</dbReference>
<dbReference type="Pfam" id="PF00005">
    <property type="entry name" value="ABC_tran"/>
    <property type="match status" value="1"/>
</dbReference>
<dbReference type="SMART" id="SM00382">
    <property type="entry name" value="AAA"/>
    <property type="match status" value="1"/>
</dbReference>
<dbReference type="SUPFAM" id="SSF52540">
    <property type="entry name" value="P-loop containing nucleoside triphosphate hydrolases"/>
    <property type="match status" value="1"/>
</dbReference>
<dbReference type="PROSITE" id="PS00211">
    <property type="entry name" value="ABC_TRANSPORTER_1"/>
    <property type="match status" value="1"/>
</dbReference>
<dbReference type="PROSITE" id="PS50893">
    <property type="entry name" value="ABC_TRANSPORTER_2"/>
    <property type="match status" value="1"/>
</dbReference>
<dbReference type="PROSITE" id="PS51291">
    <property type="entry name" value="SSUB"/>
    <property type="match status" value="1"/>
</dbReference>
<organism>
    <name type="scientific">Mycobacterium avium (strain 104)</name>
    <dbReference type="NCBI Taxonomy" id="243243"/>
    <lineage>
        <taxon>Bacteria</taxon>
        <taxon>Bacillati</taxon>
        <taxon>Actinomycetota</taxon>
        <taxon>Actinomycetes</taxon>
        <taxon>Mycobacteriales</taxon>
        <taxon>Mycobacteriaceae</taxon>
        <taxon>Mycobacterium</taxon>
        <taxon>Mycobacterium avium complex (MAC)</taxon>
    </lineage>
</organism>
<sequence length="251" mass="27571">MTLTAESGPLAGSRTDVAGELRHVDKWYGNRHVLQDVSLQIPSGQIVALIGRSGSGKSTVLRVLAGLSHDHTGRRLVAGAPALAFQEPRLFPWRDVRTNVGYGLTRTRLPRAQVRRRAERALADVGLADHARAWPLTLSGGQAQRVSLARALVAEPRLLLLDEPFGALDALTRLSMHTLLLDLWRRHGFGVLLVTHDVDEAVALADRVLVLEDGRVVHELAIDPPRRTPGEPGAHTERYRAELLDRLGVRQ</sequence>
<reference key="1">
    <citation type="submission" date="2006-10" db="EMBL/GenBank/DDBJ databases">
        <authorList>
            <person name="Fleischmann R.D."/>
            <person name="Dodson R.J."/>
            <person name="Haft D.H."/>
            <person name="Merkel J.S."/>
            <person name="Nelson W.C."/>
            <person name="Fraser C.M."/>
        </authorList>
    </citation>
    <scope>NUCLEOTIDE SEQUENCE [LARGE SCALE GENOMIC DNA]</scope>
    <source>
        <strain>104</strain>
    </source>
</reference>
<protein>
    <recommendedName>
        <fullName evidence="1">Aliphatic sulfonates import ATP-binding protein SsuB</fullName>
        <ecNumber evidence="1">7.6.2.14</ecNumber>
    </recommendedName>
</protein>
<keyword id="KW-0067">ATP-binding</keyword>
<keyword id="KW-1003">Cell membrane</keyword>
<keyword id="KW-0472">Membrane</keyword>
<keyword id="KW-0547">Nucleotide-binding</keyword>
<keyword id="KW-1278">Translocase</keyword>
<keyword id="KW-0813">Transport</keyword>
<evidence type="ECO:0000255" key="1">
    <source>
        <dbReference type="HAMAP-Rule" id="MF_01724"/>
    </source>
</evidence>
<gene>
    <name evidence="1" type="primary">ssuB</name>
    <name type="ordered locus">MAV_2434</name>
</gene>
<proteinExistence type="inferred from homology"/>